<proteinExistence type="inferred from homology"/>
<organism>
    <name type="scientific">Buchnera aphidicola subsp. Schizaphis graminum (strain Sg)</name>
    <dbReference type="NCBI Taxonomy" id="198804"/>
    <lineage>
        <taxon>Bacteria</taxon>
        <taxon>Pseudomonadati</taxon>
        <taxon>Pseudomonadota</taxon>
        <taxon>Gammaproteobacteria</taxon>
        <taxon>Enterobacterales</taxon>
        <taxon>Erwiniaceae</taxon>
        <taxon>Buchnera</taxon>
    </lineage>
</organism>
<accession>O85294</accession>
<keyword id="KW-0028">Amino-acid biosynthesis</keyword>
<keyword id="KW-0100">Branched-chain amino acid biosynthesis</keyword>
<keyword id="KW-0808">Transferase</keyword>
<gene>
    <name type="primary">ilvH</name>
    <name type="ordered locus">BUsg_219</name>
</gene>
<comment type="catalytic activity">
    <reaction>
        <text>2 pyruvate + H(+) = (2S)-2-acetolactate + CO2</text>
        <dbReference type="Rhea" id="RHEA:25249"/>
        <dbReference type="ChEBI" id="CHEBI:15361"/>
        <dbReference type="ChEBI" id="CHEBI:15378"/>
        <dbReference type="ChEBI" id="CHEBI:16526"/>
        <dbReference type="ChEBI" id="CHEBI:58476"/>
        <dbReference type="EC" id="2.2.1.6"/>
    </reaction>
</comment>
<comment type="pathway">
    <text>Amino-acid biosynthesis; L-isoleucine biosynthesis; L-isoleucine from 2-oxobutanoate: step 1/4.</text>
</comment>
<comment type="pathway">
    <text>Amino-acid biosynthesis; L-valine biosynthesis; L-valine from pyruvate: step 1/4.</text>
</comment>
<comment type="subunit">
    <text evidence="1">Dimer of large and small chains.</text>
</comment>
<comment type="similarity">
    <text evidence="3">Belongs to the acetolactate synthase small subunit family.</text>
</comment>
<name>ILVH_BUCAP</name>
<evidence type="ECO:0000250" key="1"/>
<evidence type="ECO:0000255" key="2">
    <source>
        <dbReference type="PROSITE-ProRule" id="PRU01007"/>
    </source>
</evidence>
<evidence type="ECO:0000305" key="3"/>
<sequence>MRRILSVLLENESGALSRVIGLFSQRGYNIETITVAPTEDPSLSKMTIQTIGNEKSIEQIEKQLHKLIDVLRVIKVGQNSHIEREIMLLKVQTNNCKKDDVKHITEVFRGQIVDITSTTYVLQITGTAKKLDSFLKIIRNTTEIIEMTRSGIVGIARG</sequence>
<feature type="chain" id="PRO_0000151408" description="Acetolactate synthase small subunit">
    <location>
        <begin position="1"/>
        <end position="158"/>
    </location>
</feature>
<feature type="domain" description="ACT" evidence="2">
    <location>
        <begin position="4"/>
        <end position="78"/>
    </location>
</feature>
<protein>
    <recommendedName>
        <fullName>Acetolactate synthase small subunit</fullName>
        <ecNumber>2.2.1.6</ecNumber>
    </recommendedName>
    <alternativeName>
        <fullName>Acetohydroxy-acid synthase small subunit</fullName>
        <shortName>AHAS</shortName>
        <shortName>ALS</shortName>
    </alternativeName>
</protein>
<reference key="1">
    <citation type="journal article" date="1998" name="Curr. Microbiol.">
        <title>Sequence analysis of a DNA fragment from Buchnera aphidicola (Aphid endosymbiont) containing the genes dapD-htrA-ilvI-ilvH-ftsL-ftsI-murE.</title>
        <authorList>
            <person name="Thao M.L."/>
            <person name="Baumann P."/>
        </authorList>
    </citation>
    <scope>NUCLEOTIDE SEQUENCE [GENOMIC DNA]</scope>
</reference>
<reference key="2">
    <citation type="journal article" date="2002" name="Science">
        <title>50 million years of genomic stasis in endosymbiotic bacteria.</title>
        <authorList>
            <person name="Tamas I."/>
            <person name="Klasson L."/>
            <person name="Canbaeck B."/>
            <person name="Naeslund A.K."/>
            <person name="Eriksson A.-S."/>
            <person name="Wernegreen J.J."/>
            <person name="Sandstroem J.P."/>
            <person name="Moran N.A."/>
            <person name="Andersson S.G.E."/>
        </authorList>
    </citation>
    <scope>NUCLEOTIDE SEQUENCE [LARGE SCALE GENOMIC DNA]</scope>
    <source>
        <strain>Sg</strain>
    </source>
</reference>
<dbReference type="EC" id="2.2.1.6"/>
<dbReference type="EMBL" id="AF060492">
    <property type="protein sequence ID" value="AAC32334.1"/>
    <property type="molecule type" value="Genomic_DNA"/>
</dbReference>
<dbReference type="EMBL" id="AE013218">
    <property type="protein sequence ID" value="AAM67779.1"/>
    <property type="molecule type" value="Genomic_DNA"/>
</dbReference>
<dbReference type="RefSeq" id="WP_011053746.1">
    <property type="nucleotide sequence ID" value="NC_004061.1"/>
</dbReference>
<dbReference type="SMR" id="O85294"/>
<dbReference type="STRING" id="198804.BUsg_219"/>
<dbReference type="GeneID" id="93003685"/>
<dbReference type="KEGG" id="bas:BUsg_219"/>
<dbReference type="eggNOG" id="COG0440">
    <property type="taxonomic scope" value="Bacteria"/>
</dbReference>
<dbReference type="HOGENOM" id="CLU_055003_1_3_6"/>
<dbReference type="UniPathway" id="UPA00047">
    <property type="reaction ID" value="UER00055"/>
</dbReference>
<dbReference type="UniPathway" id="UPA00049">
    <property type="reaction ID" value="UER00059"/>
</dbReference>
<dbReference type="Proteomes" id="UP000000416">
    <property type="component" value="Chromosome"/>
</dbReference>
<dbReference type="GO" id="GO:0005829">
    <property type="term" value="C:cytosol"/>
    <property type="evidence" value="ECO:0007669"/>
    <property type="project" value="TreeGrafter"/>
</dbReference>
<dbReference type="GO" id="GO:0003984">
    <property type="term" value="F:acetolactate synthase activity"/>
    <property type="evidence" value="ECO:0007669"/>
    <property type="project" value="UniProtKB-EC"/>
</dbReference>
<dbReference type="GO" id="GO:1990610">
    <property type="term" value="F:acetolactate synthase regulator activity"/>
    <property type="evidence" value="ECO:0007669"/>
    <property type="project" value="InterPro"/>
</dbReference>
<dbReference type="GO" id="GO:0009097">
    <property type="term" value="P:isoleucine biosynthetic process"/>
    <property type="evidence" value="ECO:0007669"/>
    <property type="project" value="UniProtKB-UniPathway"/>
</dbReference>
<dbReference type="GO" id="GO:0009099">
    <property type="term" value="P:L-valine biosynthetic process"/>
    <property type="evidence" value="ECO:0007669"/>
    <property type="project" value="UniProtKB-UniPathway"/>
</dbReference>
<dbReference type="CDD" id="cd04878">
    <property type="entry name" value="ACT_AHAS"/>
    <property type="match status" value="1"/>
</dbReference>
<dbReference type="FunFam" id="3.30.70.260:FF:000001">
    <property type="entry name" value="Acetolactate synthase, small subunit"/>
    <property type="match status" value="1"/>
</dbReference>
<dbReference type="Gene3D" id="3.30.70.260">
    <property type="match status" value="1"/>
</dbReference>
<dbReference type="Gene3D" id="3.30.70.1150">
    <property type="entry name" value="ACT-like. Chain A, domain 2"/>
    <property type="match status" value="1"/>
</dbReference>
<dbReference type="InterPro" id="IPR004789">
    <property type="entry name" value="Acetalactate_synth_ssu"/>
</dbReference>
<dbReference type="InterPro" id="IPR027271">
    <property type="entry name" value="Acetolactate_synth/TF_NikR_C"/>
</dbReference>
<dbReference type="InterPro" id="IPR019455">
    <property type="entry name" value="Acetolactate_synth_ssu_C"/>
</dbReference>
<dbReference type="InterPro" id="IPR045865">
    <property type="entry name" value="ACT-like_dom_sf"/>
</dbReference>
<dbReference type="InterPro" id="IPR002912">
    <property type="entry name" value="ACT_dom"/>
</dbReference>
<dbReference type="InterPro" id="IPR039557">
    <property type="entry name" value="AHAS_ACT"/>
</dbReference>
<dbReference type="InterPro" id="IPR054480">
    <property type="entry name" value="AHAS_small-like_ACT"/>
</dbReference>
<dbReference type="NCBIfam" id="TIGR00119">
    <property type="entry name" value="acolac_sm"/>
    <property type="match status" value="1"/>
</dbReference>
<dbReference type="NCBIfam" id="NF008864">
    <property type="entry name" value="PRK11895.1"/>
    <property type="match status" value="1"/>
</dbReference>
<dbReference type="PANTHER" id="PTHR30239">
    <property type="entry name" value="ACETOLACTATE SYNTHASE SMALL SUBUNIT"/>
    <property type="match status" value="1"/>
</dbReference>
<dbReference type="PANTHER" id="PTHR30239:SF0">
    <property type="entry name" value="ACETOLACTATE SYNTHASE SMALL SUBUNIT 1, CHLOROPLASTIC"/>
    <property type="match status" value="1"/>
</dbReference>
<dbReference type="Pfam" id="PF22629">
    <property type="entry name" value="ACT_AHAS_ss"/>
    <property type="match status" value="1"/>
</dbReference>
<dbReference type="Pfam" id="PF10369">
    <property type="entry name" value="ALS_ss_C"/>
    <property type="match status" value="1"/>
</dbReference>
<dbReference type="SUPFAM" id="SSF55021">
    <property type="entry name" value="ACT-like"/>
    <property type="match status" value="2"/>
</dbReference>
<dbReference type="PROSITE" id="PS51671">
    <property type="entry name" value="ACT"/>
    <property type="match status" value="1"/>
</dbReference>